<comment type="function">
    <text evidence="2">Transcription factor that binds to the octamer motif (5'-ATTTGCAT-3'). Forms a trimeric complex with SOX2 or SOX15 on DNA and controls the expression of a number of genes involved in embryonic development such as YES1, FGF4, UTF1 and ZFP206. Critical for early embryogenesis and for embryonic stem cell pluripotency (By similarity).</text>
</comment>
<comment type="subunit">
    <text evidence="1 2">Interacts with PKM. Interacts with WWP2. Interacts with UBE2I and ZSCAN10. Interacts with PCGF1. Interacts with ESRRB; recruits ESRRB near the POU5F1-SOX2 element in the NANOG proximal promoter; the interaction is DNA independent. Interacts with MAPK8 and MAPK9; the interaction allows MAPK8 and MAPK9 to phosphorylate POU5F1 on Ser-355. Interacts (when phosphorylated on Ser-355) with FBXW8. Interacts with FBXW4. Interacts with SOX2 and SOX15; binds synergistically with either SOX2 or SOX15 to DNA (By similarity). Interacts with DDX56 (By similarity).</text>
</comment>
<comment type="subcellular location">
    <subcellularLocation>
        <location>Cytoplasm</location>
    </subcellularLocation>
    <subcellularLocation>
        <location>Nucleus</location>
    </subcellularLocation>
    <text evidence="1 2">Expressed in a diffuse and slightly punctuate pattern. Colocalizes with MAPK8 and MAPK9 in the nucleus.</text>
</comment>
<comment type="tissue specificity">
    <text evidence="6">Expressed in immature oocytes.</text>
</comment>
<comment type="domain">
    <text evidence="2">The POU-specific domain mediates interaction with PKM.</text>
</comment>
<comment type="domain">
    <text evidence="2">The 9aaTAD motif is a transactivation domain present in a large number of yeast and animal transcription factors.</text>
</comment>
<comment type="PTM">
    <text evidence="1">Sumoylation enhances the protein stability, DNA binding and transactivation activity. Sumoylation is required for enhanced YES1 expression.</text>
</comment>
<comment type="PTM">
    <text evidence="1">Ubiquitinated; undergoes 'Lys-63'-linked polyubiquitination by WWP2 leading to proteasomal degradation.</text>
</comment>
<comment type="PTM">
    <text evidence="2">ERK1/2-mediated phosphorylation at Ser-111 promotes nuclear exclusion and proteasomal degradation. Phosphorylation at Thr-235 and Ser-236 decrease DNA-binding and alters ability to activate transcription.</text>
</comment>
<comment type="similarity">
    <text evidence="7">Belongs to the POU transcription factor family. Class-5 subfamily.</text>
</comment>
<reference key="1">
    <citation type="journal article" date="1999" name="Biol. Reprod.">
        <title>Molecular cloning, genetic mapping, and developmental expression of bovine POU5F1.</title>
        <authorList>
            <person name="van Eijk M.J.T."/>
            <person name="van Rooijen M.A."/>
            <person name="Modina S."/>
            <person name="Scesi L."/>
            <person name="Folkers G."/>
            <person name="van Tol H.T.A."/>
            <person name="Bevers M.M."/>
            <person name="Fisher S.R."/>
            <person name="Lewin H.A."/>
            <person name="Shehu D."/>
            <person name="Galli C."/>
            <person name="de Vaureix C."/>
            <person name="Trounson A.O."/>
            <person name="Mummery C.L."/>
            <person name="Gandolfi F."/>
        </authorList>
    </citation>
    <scope>NUCLEOTIDE SEQUENCE [GENOMIC DNA]</scope>
    <scope>TISSUE SPECIFICITY</scope>
</reference>
<feature type="chain" id="PRO_0000100746" description="POU domain, class 5, transcription factor 1">
    <location>
        <begin position="1"/>
        <end position="360"/>
    </location>
</feature>
<feature type="domain" description="POU-specific" evidence="4">
    <location>
        <begin position="138"/>
        <end position="212"/>
    </location>
</feature>
<feature type="DNA-binding region" description="Homeobox" evidence="3">
    <location>
        <begin position="230"/>
        <end position="289"/>
    </location>
</feature>
<feature type="region of interest" description="Disordered" evidence="5">
    <location>
        <begin position="1"/>
        <end position="48"/>
    </location>
</feature>
<feature type="region of interest" description="Disordered" evidence="5">
    <location>
        <begin position="86"/>
        <end position="137"/>
    </location>
</feature>
<feature type="region of interest" description="DNA-binding" evidence="1">
    <location>
        <begin position="180"/>
        <end position="186"/>
    </location>
</feature>
<feature type="region of interest" description="DNA-binding" evidence="1">
    <location>
        <begin position="193"/>
        <end position="196"/>
    </location>
</feature>
<feature type="region of interest" description="Disordered" evidence="5">
    <location>
        <begin position="287"/>
        <end position="322"/>
    </location>
</feature>
<feature type="short sequence motif" description="9aaTAD" evidence="2">
    <location>
        <begin position="4"/>
        <end position="12"/>
    </location>
</feature>
<feature type="compositionally biased region" description="Basic and acidic residues" evidence="5">
    <location>
        <begin position="123"/>
        <end position="137"/>
    </location>
</feature>
<feature type="binding site" evidence="1">
    <location>
        <position position="157"/>
    </location>
    <ligand>
        <name>DNA</name>
        <dbReference type="ChEBI" id="CHEBI:16991"/>
    </ligand>
</feature>
<feature type="binding site" evidence="1">
    <location>
        <position position="164"/>
    </location>
    <ligand>
        <name>DNA</name>
        <dbReference type="ChEBI" id="CHEBI:16991"/>
    </ligand>
</feature>
<feature type="modified residue" description="Phosphoserine; by MAPK" evidence="2">
    <location>
        <position position="111"/>
    </location>
</feature>
<feature type="modified residue" description="Phosphothreonine" evidence="2">
    <location>
        <position position="235"/>
    </location>
</feature>
<feature type="modified residue" description="Phosphoserine" evidence="2">
    <location>
        <position position="236"/>
    </location>
</feature>
<feature type="modified residue" description="Phosphoserine" evidence="2">
    <location>
        <position position="289"/>
    </location>
</feature>
<feature type="modified residue" description="Phosphoserine" evidence="2">
    <location>
        <position position="290"/>
    </location>
</feature>
<feature type="modified residue" description="Phosphoserine" evidence="1">
    <location>
        <position position="355"/>
    </location>
</feature>
<feature type="cross-link" description="Glycyl lysine isopeptide (Lys-Gly) (interchain with G-Cter in SUMO)" evidence="1">
    <location>
        <position position="123"/>
    </location>
</feature>
<evidence type="ECO:0000250" key="1">
    <source>
        <dbReference type="UniProtKB" id="P20263"/>
    </source>
</evidence>
<evidence type="ECO:0000250" key="2">
    <source>
        <dbReference type="UniProtKB" id="Q01860"/>
    </source>
</evidence>
<evidence type="ECO:0000255" key="3">
    <source>
        <dbReference type="PROSITE-ProRule" id="PRU00108"/>
    </source>
</evidence>
<evidence type="ECO:0000255" key="4">
    <source>
        <dbReference type="PROSITE-ProRule" id="PRU00530"/>
    </source>
</evidence>
<evidence type="ECO:0000256" key="5">
    <source>
        <dbReference type="SAM" id="MobiDB-lite"/>
    </source>
</evidence>
<evidence type="ECO:0000269" key="6">
    <source>
    </source>
</evidence>
<evidence type="ECO:0000305" key="7"/>
<proteinExistence type="evidence at transcript level"/>
<accession>O97552</accession>
<name>PO5F1_BOVIN</name>
<organism>
    <name type="scientific">Bos taurus</name>
    <name type="common">Bovine</name>
    <dbReference type="NCBI Taxonomy" id="9913"/>
    <lineage>
        <taxon>Eukaryota</taxon>
        <taxon>Metazoa</taxon>
        <taxon>Chordata</taxon>
        <taxon>Craniata</taxon>
        <taxon>Vertebrata</taxon>
        <taxon>Euteleostomi</taxon>
        <taxon>Mammalia</taxon>
        <taxon>Eutheria</taxon>
        <taxon>Laurasiatheria</taxon>
        <taxon>Artiodactyla</taxon>
        <taxon>Ruminantia</taxon>
        <taxon>Pecora</taxon>
        <taxon>Bovidae</taxon>
        <taxon>Bovinae</taxon>
        <taxon>Bos</taxon>
    </lineage>
</organism>
<gene>
    <name type="primary">POU5F1</name>
    <name type="synonym">OCT3</name>
</gene>
<protein>
    <recommendedName>
        <fullName>POU domain, class 5, transcription factor 1</fullName>
    </recommendedName>
    <alternativeName>
        <fullName>Octamer-binding protein 3</fullName>
        <shortName>Oct-3</shortName>
    </alternativeName>
    <alternativeName>
        <fullName>Octamer-binding transcription factor 3</fullName>
        <shortName>OTF-3</shortName>
    </alternativeName>
</protein>
<sequence length="360" mass="38289">MAGHLASDFAFSPPPGGGGDGPGGPEPGWVDPRTWMSFQGPPGGSGIGPGVVPGAEVWGLPPCPPPYDLCGGMAYCAPQVGVGPVPPGGLETPQPEGEAGAGVESNSEGASPDPCAAPAGAPKLDKEKLEPNPEESQDIKALQKDLEQFAKLLKQKRITLGYTQADVGLTLGVLFGKVFSQTTICRFEALQLSFKNMCKLRPLLQKWVEEADNNENLQEICKAETLVQARKRKRTSIENRVRGNLESMFLQCPKPTLQQISHIAQQLGLEKDVVRVWFCNRRQKGKRSSSDYSQREDFEAAGSPFTGGPVSSPLAPGPHFGTPGYGGPHFTTLYSSVPFPEGEVFPSVSVTALGSPMHAN</sequence>
<dbReference type="EMBL" id="AF022987">
    <property type="protein sequence ID" value="AAD01757.1"/>
    <property type="molecule type" value="Genomic_DNA"/>
</dbReference>
<dbReference type="EMBL" id="AF022986">
    <property type="protein sequence ID" value="AAD01757.1"/>
    <property type="status" value="JOINED"/>
    <property type="molecule type" value="Genomic_DNA"/>
</dbReference>
<dbReference type="SMR" id="O97552"/>
<dbReference type="FunCoup" id="O97552">
    <property type="interactions" value="67"/>
</dbReference>
<dbReference type="STRING" id="9913.ENSBTAP00000028122"/>
<dbReference type="PaxDb" id="9913-ENSBTAP00000028122"/>
<dbReference type="eggNOG" id="KOG3802">
    <property type="taxonomic scope" value="Eukaryota"/>
</dbReference>
<dbReference type="InParanoid" id="O97552"/>
<dbReference type="OrthoDB" id="6358449at2759"/>
<dbReference type="Proteomes" id="UP000009136">
    <property type="component" value="Unplaced"/>
</dbReference>
<dbReference type="GO" id="GO:0005737">
    <property type="term" value="C:cytoplasm"/>
    <property type="evidence" value="ECO:0007669"/>
    <property type="project" value="UniProtKB-SubCell"/>
</dbReference>
<dbReference type="GO" id="GO:0005634">
    <property type="term" value="C:nucleus"/>
    <property type="evidence" value="ECO:0007669"/>
    <property type="project" value="UniProtKB-SubCell"/>
</dbReference>
<dbReference type="GO" id="GO:0000981">
    <property type="term" value="F:DNA-binding transcription factor activity, RNA polymerase II-specific"/>
    <property type="evidence" value="ECO:0000318"/>
    <property type="project" value="GO_Central"/>
</dbReference>
<dbReference type="GO" id="GO:0000978">
    <property type="term" value="F:RNA polymerase II cis-regulatory region sequence-specific DNA binding"/>
    <property type="evidence" value="ECO:0000318"/>
    <property type="project" value="GO_Central"/>
</dbReference>
<dbReference type="GO" id="GO:0006357">
    <property type="term" value="P:regulation of transcription by RNA polymerase II"/>
    <property type="evidence" value="ECO:0000318"/>
    <property type="project" value="GO_Central"/>
</dbReference>
<dbReference type="CDD" id="cd00086">
    <property type="entry name" value="homeodomain"/>
    <property type="match status" value="1"/>
</dbReference>
<dbReference type="FunFam" id="1.10.10.60:FF:000161">
    <property type="entry name" value="POU domain protein"/>
    <property type="match status" value="1"/>
</dbReference>
<dbReference type="FunFam" id="1.10.260.40:FF:000022">
    <property type="entry name" value="POU domain protein"/>
    <property type="match status" value="1"/>
</dbReference>
<dbReference type="Gene3D" id="1.10.10.60">
    <property type="entry name" value="Homeodomain-like"/>
    <property type="match status" value="1"/>
</dbReference>
<dbReference type="Gene3D" id="1.10.260.40">
    <property type="entry name" value="lambda repressor-like DNA-binding domains"/>
    <property type="match status" value="1"/>
</dbReference>
<dbReference type="InterPro" id="IPR001356">
    <property type="entry name" value="HD"/>
</dbReference>
<dbReference type="InterPro" id="IPR017970">
    <property type="entry name" value="Homeobox_CS"/>
</dbReference>
<dbReference type="InterPro" id="IPR009057">
    <property type="entry name" value="Homeodomain-like_sf"/>
</dbReference>
<dbReference type="InterPro" id="IPR010982">
    <property type="entry name" value="Lambda_DNA-bd_dom_sf"/>
</dbReference>
<dbReference type="InterPro" id="IPR013847">
    <property type="entry name" value="POU"/>
</dbReference>
<dbReference type="InterPro" id="IPR000327">
    <property type="entry name" value="POU_dom"/>
</dbReference>
<dbReference type="InterPro" id="IPR050255">
    <property type="entry name" value="POU_domain_TF"/>
</dbReference>
<dbReference type="PANTHER" id="PTHR11636">
    <property type="entry name" value="POU DOMAIN"/>
    <property type="match status" value="1"/>
</dbReference>
<dbReference type="PANTHER" id="PTHR11636:SF86">
    <property type="entry name" value="POU DOMAIN, CLASS 5, TRANSCRIPTION FACTOR 1-RELATED"/>
    <property type="match status" value="1"/>
</dbReference>
<dbReference type="Pfam" id="PF00046">
    <property type="entry name" value="Homeodomain"/>
    <property type="match status" value="1"/>
</dbReference>
<dbReference type="Pfam" id="PF00157">
    <property type="entry name" value="Pou"/>
    <property type="match status" value="1"/>
</dbReference>
<dbReference type="PRINTS" id="PR00028">
    <property type="entry name" value="POUDOMAIN"/>
</dbReference>
<dbReference type="SMART" id="SM00389">
    <property type="entry name" value="HOX"/>
    <property type="match status" value="1"/>
</dbReference>
<dbReference type="SMART" id="SM00352">
    <property type="entry name" value="POU"/>
    <property type="match status" value="1"/>
</dbReference>
<dbReference type="SUPFAM" id="SSF46689">
    <property type="entry name" value="Homeodomain-like"/>
    <property type="match status" value="1"/>
</dbReference>
<dbReference type="SUPFAM" id="SSF47413">
    <property type="entry name" value="lambda repressor-like DNA-binding domains"/>
    <property type="match status" value="1"/>
</dbReference>
<dbReference type="PROSITE" id="PS00027">
    <property type="entry name" value="HOMEOBOX_1"/>
    <property type="match status" value="1"/>
</dbReference>
<dbReference type="PROSITE" id="PS50071">
    <property type="entry name" value="HOMEOBOX_2"/>
    <property type="match status" value="1"/>
</dbReference>
<dbReference type="PROSITE" id="PS00035">
    <property type="entry name" value="POU_1"/>
    <property type="match status" value="1"/>
</dbReference>
<dbReference type="PROSITE" id="PS00465">
    <property type="entry name" value="POU_2"/>
    <property type="match status" value="1"/>
</dbReference>
<dbReference type="PROSITE" id="PS51179">
    <property type="entry name" value="POU_3"/>
    <property type="match status" value="1"/>
</dbReference>
<keyword id="KW-0963">Cytoplasm</keyword>
<keyword id="KW-0217">Developmental protein</keyword>
<keyword id="KW-0238">DNA-binding</keyword>
<keyword id="KW-0371">Homeobox</keyword>
<keyword id="KW-1017">Isopeptide bond</keyword>
<keyword id="KW-0539">Nucleus</keyword>
<keyword id="KW-0597">Phosphoprotein</keyword>
<keyword id="KW-1185">Reference proteome</keyword>
<keyword id="KW-0804">Transcription</keyword>
<keyword id="KW-0805">Transcription regulation</keyword>
<keyword id="KW-0832">Ubl conjugation</keyword>